<dbReference type="EC" id="3.6.4.12" evidence="4"/>
<dbReference type="EMBL" id="AY057075">
    <property type="protein sequence ID" value="AAL18005.1"/>
    <property type="molecule type" value="mRNA"/>
</dbReference>
<dbReference type="EMBL" id="BC058871">
    <property type="protein sequence ID" value="AAH58871.1"/>
    <property type="molecule type" value="mRNA"/>
</dbReference>
<dbReference type="RefSeq" id="NP_777285.1">
    <property type="nucleotide sequence ID" value="NM_174860.2"/>
</dbReference>
<dbReference type="SMR" id="P83571"/>
<dbReference type="FunCoup" id="P83571">
    <property type="interactions" value="2671"/>
</dbReference>
<dbReference type="STRING" id="7955.ENSDARP00000072482"/>
<dbReference type="PaxDb" id="7955-ENSDARP00000072482"/>
<dbReference type="Ensembl" id="ENSDART00000078018">
    <property type="protein sequence ID" value="ENSDARP00000072482"/>
    <property type="gene ID" value="ENSDARG00000055639"/>
</dbReference>
<dbReference type="GeneID" id="317678"/>
<dbReference type="KEGG" id="dre:317678"/>
<dbReference type="AGR" id="ZFIN:ZDB-GENE-030109-1"/>
<dbReference type="CTD" id="10856"/>
<dbReference type="ZFIN" id="ZDB-GENE-030109-1">
    <property type="gene designation" value="ruvbl2"/>
</dbReference>
<dbReference type="eggNOG" id="KOG2680">
    <property type="taxonomic scope" value="Eukaryota"/>
</dbReference>
<dbReference type="HOGENOM" id="CLU_028311_4_0_1"/>
<dbReference type="InParanoid" id="P83571"/>
<dbReference type="OMA" id="IINTEPY"/>
<dbReference type="OrthoDB" id="10060499at2759"/>
<dbReference type="PhylomeDB" id="P83571"/>
<dbReference type="TreeFam" id="TF300469"/>
<dbReference type="PRO" id="PR:P83571"/>
<dbReference type="Proteomes" id="UP000000437">
    <property type="component" value="Alternate scaffold 5"/>
</dbReference>
<dbReference type="Proteomes" id="UP000000437">
    <property type="component" value="Chromosome 5"/>
</dbReference>
<dbReference type="Bgee" id="ENSDARG00000055639">
    <property type="expression patterns" value="Expressed in testis and 23 other cell types or tissues"/>
</dbReference>
<dbReference type="GO" id="GO:0120293">
    <property type="term" value="C:dynein axonemal particle"/>
    <property type="evidence" value="ECO:0000250"/>
    <property type="project" value="UniProtKB"/>
</dbReference>
<dbReference type="GO" id="GO:0005576">
    <property type="term" value="C:extracellular region"/>
    <property type="evidence" value="ECO:0007669"/>
    <property type="project" value="GOC"/>
</dbReference>
<dbReference type="GO" id="GO:0031011">
    <property type="term" value="C:Ino80 complex"/>
    <property type="evidence" value="ECO:0000318"/>
    <property type="project" value="GO_Central"/>
</dbReference>
<dbReference type="GO" id="GO:0071339">
    <property type="term" value="C:MLL1 complex"/>
    <property type="evidence" value="ECO:0000250"/>
    <property type="project" value="UniProtKB"/>
</dbReference>
<dbReference type="GO" id="GO:0035267">
    <property type="term" value="C:NuA4 histone acetyltransferase complex"/>
    <property type="evidence" value="ECO:0000318"/>
    <property type="project" value="GO_Central"/>
</dbReference>
<dbReference type="GO" id="GO:0005634">
    <property type="term" value="C:nucleus"/>
    <property type="evidence" value="ECO:0000250"/>
    <property type="project" value="UniProtKB"/>
</dbReference>
<dbReference type="GO" id="GO:0097255">
    <property type="term" value="C:R2TP complex"/>
    <property type="evidence" value="ECO:0000318"/>
    <property type="project" value="GO_Central"/>
</dbReference>
<dbReference type="GO" id="GO:0000812">
    <property type="term" value="C:Swr1 complex"/>
    <property type="evidence" value="ECO:0000250"/>
    <property type="project" value="UniProtKB"/>
</dbReference>
<dbReference type="GO" id="GO:0005524">
    <property type="term" value="F:ATP binding"/>
    <property type="evidence" value="ECO:0007669"/>
    <property type="project" value="UniProtKB-KW"/>
</dbReference>
<dbReference type="GO" id="GO:0016887">
    <property type="term" value="F:ATP hydrolysis activity"/>
    <property type="evidence" value="ECO:0000314"/>
    <property type="project" value="UniProtKB"/>
</dbReference>
<dbReference type="GO" id="GO:0003678">
    <property type="term" value="F:DNA helicase activity"/>
    <property type="evidence" value="ECO:0000250"/>
    <property type="project" value="UniProtKB"/>
</dbReference>
<dbReference type="GO" id="GO:0070286">
    <property type="term" value="P:axonemal dynein complex assembly"/>
    <property type="evidence" value="ECO:0000315"/>
    <property type="project" value="ZFIN"/>
</dbReference>
<dbReference type="GO" id="GO:0000492">
    <property type="term" value="P:box C/D snoRNP assembly"/>
    <property type="evidence" value="ECO:0000318"/>
    <property type="project" value="GO_Central"/>
</dbReference>
<dbReference type="GO" id="GO:0006338">
    <property type="term" value="P:chromatin remodeling"/>
    <property type="evidence" value="ECO:0000318"/>
    <property type="project" value="GO_Central"/>
</dbReference>
<dbReference type="GO" id="GO:0048565">
    <property type="term" value="P:digestive tract development"/>
    <property type="evidence" value="ECO:0000315"/>
    <property type="project" value="ZFIN"/>
</dbReference>
<dbReference type="GO" id="GO:0006310">
    <property type="term" value="P:DNA recombination"/>
    <property type="evidence" value="ECO:0007669"/>
    <property type="project" value="UniProtKB-KW"/>
</dbReference>
<dbReference type="GO" id="GO:0006281">
    <property type="term" value="P:DNA repair"/>
    <property type="evidence" value="ECO:0007669"/>
    <property type="project" value="UniProtKB-KW"/>
</dbReference>
<dbReference type="GO" id="GO:0003351">
    <property type="term" value="P:epithelial cilium movement involved in extracellular fluid movement"/>
    <property type="evidence" value="ECO:0000315"/>
    <property type="project" value="ZFIN"/>
</dbReference>
<dbReference type="GO" id="GO:0007507">
    <property type="term" value="P:heart development"/>
    <property type="evidence" value="ECO:0000315"/>
    <property type="project" value="ZFIN"/>
</dbReference>
<dbReference type="GO" id="GO:0044458">
    <property type="term" value="P:motile cilium assembly"/>
    <property type="evidence" value="ECO:0000315"/>
    <property type="project" value="ZFIN"/>
</dbReference>
<dbReference type="GO" id="GO:0045892">
    <property type="term" value="P:negative regulation of DNA-templated transcription"/>
    <property type="evidence" value="ECO:0000314"/>
    <property type="project" value="UniProtKB"/>
</dbReference>
<dbReference type="GO" id="GO:0060420">
    <property type="term" value="P:regulation of heart growth"/>
    <property type="evidence" value="ECO:0000315"/>
    <property type="project" value="ZFIN"/>
</dbReference>
<dbReference type="GO" id="GO:0006357">
    <property type="term" value="P:regulation of transcription by RNA polymerase II"/>
    <property type="evidence" value="ECO:0000318"/>
    <property type="project" value="GO_Central"/>
</dbReference>
<dbReference type="FunFam" id="3.40.50.300:FF:002221">
    <property type="entry name" value="RuvB-like 2"/>
    <property type="match status" value="2"/>
</dbReference>
<dbReference type="FunFam" id="1.10.8.60:FF:000010">
    <property type="entry name" value="RuvB-like helicase"/>
    <property type="match status" value="1"/>
</dbReference>
<dbReference type="FunFam" id="2.40.50.360:FF:000002">
    <property type="entry name" value="RuvB-like helicase"/>
    <property type="match status" value="1"/>
</dbReference>
<dbReference type="Gene3D" id="1.10.8.60">
    <property type="match status" value="1"/>
</dbReference>
<dbReference type="Gene3D" id="3.40.50.300">
    <property type="entry name" value="P-loop containing nucleotide triphosphate hydrolases"/>
    <property type="match status" value="1"/>
</dbReference>
<dbReference type="Gene3D" id="2.40.50.360">
    <property type="entry name" value="RuvB-like helicase, domain II"/>
    <property type="match status" value="1"/>
</dbReference>
<dbReference type="InterPro" id="IPR003593">
    <property type="entry name" value="AAA+_ATPase"/>
</dbReference>
<dbReference type="InterPro" id="IPR027417">
    <property type="entry name" value="P-loop_NTPase"/>
</dbReference>
<dbReference type="InterPro" id="IPR027238">
    <property type="entry name" value="RuvB-like"/>
</dbReference>
<dbReference type="InterPro" id="IPR041048">
    <property type="entry name" value="RuvB-like_C"/>
</dbReference>
<dbReference type="InterPro" id="IPR042487">
    <property type="entry name" value="RuvBL1/2_DNA/RNA_bd_dom"/>
</dbReference>
<dbReference type="InterPro" id="IPR010339">
    <property type="entry name" value="TIP49_P-loop"/>
</dbReference>
<dbReference type="PANTHER" id="PTHR11093">
    <property type="entry name" value="RUVB-RELATED REPTIN AND PONTIN"/>
    <property type="match status" value="1"/>
</dbReference>
<dbReference type="Pfam" id="PF06068">
    <property type="entry name" value="TIP49"/>
    <property type="match status" value="1"/>
</dbReference>
<dbReference type="Pfam" id="PF17856">
    <property type="entry name" value="TIP49_C"/>
    <property type="match status" value="1"/>
</dbReference>
<dbReference type="SMART" id="SM00382">
    <property type="entry name" value="AAA"/>
    <property type="match status" value="1"/>
</dbReference>
<dbReference type="SUPFAM" id="SSF52540">
    <property type="entry name" value="P-loop containing nucleoside triphosphate hydrolases"/>
    <property type="match status" value="1"/>
</dbReference>
<reference evidence="5" key="1">
    <citation type="journal article" date="2002" name="Cell">
        <title>Reptin and pontin antagonistically regulate heart growth in zebrafish embryos.</title>
        <authorList>
            <person name="Rottbauer W."/>
            <person name="Saurin A.J."/>
            <person name="Lickert H."/>
            <person name="Shen X."/>
            <person name="Burns C.G."/>
            <person name="Wo Z.G."/>
            <person name="Kemler R."/>
            <person name="Kingston R."/>
            <person name="Wu C."/>
            <person name="Fishman M."/>
        </authorList>
    </citation>
    <scope>NUCLEOTIDE SEQUENCE [MRNA]</scope>
    <scope>FUNCTION</scope>
    <scope>DEVELOPMENTAL STAGE</scope>
    <scope>DISRUPTION PHENOTYPE</scope>
    <scope>MUTAGENESIS OF GLY-190</scope>
    <scope>CATALYTIC ACTIVITY</scope>
</reference>
<reference key="2">
    <citation type="submission" date="2003-10" db="EMBL/GenBank/DDBJ databases">
        <authorList>
            <consortium name="NIH - Zebrafish Gene Collection (ZGC) project"/>
        </authorList>
    </citation>
    <scope>NUCLEOTIDE SEQUENCE [LARGE SCALE MRNA]</scope>
    <source>
        <strain>AB</strain>
    </source>
</reference>
<accession>P83571</accession>
<protein>
    <recommendedName>
        <fullName>RuvB-like 2</fullName>
        <ecNumber evidence="4">3.6.4.12</ecNumber>
    </recommendedName>
    <alternativeName>
        <fullName>Reptin</fullName>
    </alternativeName>
    <alternativeName>
        <fullName>zReptin</fullName>
    </alternativeName>
</protein>
<evidence type="ECO:0000250" key="1"/>
<evidence type="ECO:0000250" key="2">
    <source>
        <dbReference type="UniProtKB" id="Q9DE27"/>
    </source>
</evidence>
<evidence type="ECO:0000250" key="3">
    <source>
        <dbReference type="UniProtKB" id="Q9Y230"/>
    </source>
</evidence>
<evidence type="ECO:0000269" key="4">
    <source>
    </source>
</evidence>
<evidence type="ECO:0000305" key="5"/>
<evidence type="ECO:0000305" key="6">
    <source>
    </source>
</evidence>
<evidence type="ECO:0000312" key="7">
    <source>
        <dbReference type="EMBL" id="AAL18005.1"/>
    </source>
</evidence>
<keyword id="KW-0067">ATP-binding</keyword>
<keyword id="KW-0963">Cytoplasm</keyword>
<keyword id="KW-0227">DNA damage</keyword>
<keyword id="KW-0233">DNA recombination</keyword>
<keyword id="KW-0234">DNA repair</keyword>
<keyword id="KW-0347">Helicase</keyword>
<keyword id="KW-0378">Hydrolase</keyword>
<keyword id="KW-0547">Nucleotide-binding</keyword>
<keyword id="KW-0539">Nucleus</keyword>
<keyword id="KW-1185">Reference proteome</keyword>
<keyword id="KW-0804">Transcription</keyword>
<keyword id="KW-0805">Transcription regulation</keyword>
<organism evidence="7">
    <name type="scientific">Danio rerio</name>
    <name type="common">Zebrafish</name>
    <name type="synonym">Brachydanio rerio</name>
    <dbReference type="NCBI Taxonomy" id="7955"/>
    <lineage>
        <taxon>Eukaryota</taxon>
        <taxon>Metazoa</taxon>
        <taxon>Chordata</taxon>
        <taxon>Craniata</taxon>
        <taxon>Vertebrata</taxon>
        <taxon>Euteleostomi</taxon>
        <taxon>Actinopterygii</taxon>
        <taxon>Neopterygii</taxon>
        <taxon>Teleostei</taxon>
        <taxon>Ostariophysi</taxon>
        <taxon>Cypriniformes</taxon>
        <taxon>Danionidae</taxon>
        <taxon>Danioninae</taxon>
        <taxon>Danio</taxon>
    </lineage>
</organism>
<feature type="chain" id="PRO_0000165646" description="RuvB-like 2">
    <location>
        <begin position="1"/>
        <end position="463"/>
    </location>
</feature>
<feature type="binding site" evidence="1">
    <location>
        <begin position="77"/>
        <end position="84"/>
    </location>
    <ligand>
        <name>ATP</name>
        <dbReference type="ChEBI" id="CHEBI:30616"/>
    </ligand>
</feature>
<feature type="mutagenesis site" description="In LIK mutant; causes embryonic cardiac hyperplasia." evidence="4">
    <original>G</original>
    <variation>GFCR</variation>
    <location>
        <position position="190"/>
    </location>
</feature>
<comment type="function">
    <text evidence="3 4">Has double-stranded DNA-stimulated ATPase activity (PubMed:12464178). Has ATP-dependent DNA helicase (5' to 3') activity suggesting a role in nuclear processes such as recombination and transcription (By similarity). Represses gene activation mediated by beta-catenin (PubMed:12464178). Proposed core component of the chromatin remodeling Ino80 complex which exhibits DNA- and nucleosome-activated ATPase activity and catalyzes ATP-dependent nucleosome sliding (By similarity). Involved in the endoplasmic reticulum (ER)-associated degradation (ERAD) pathway where it negatively regulates expression of ER stress response genes (By similarity). May act as a regulator of embryonic heart growth (PubMed:12464178).</text>
</comment>
<comment type="catalytic activity">
    <reaction evidence="4">
        <text>ATP + H2O = ADP + phosphate + H(+)</text>
        <dbReference type="Rhea" id="RHEA:13065"/>
        <dbReference type="ChEBI" id="CHEBI:15377"/>
        <dbReference type="ChEBI" id="CHEBI:15378"/>
        <dbReference type="ChEBI" id="CHEBI:30616"/>
        <dbReference type="ChEBI" id="CHEBI:43474"/>
        <dbReference type="ChEBI" id="CHEBI:456216"/>
        <dbReference type="EC" id="3.6.4.12"/>
    </reaction>
    <physiologicalReaction direction="left-to-right" evidence="6">
        <dbReference type="Rhea" id="RHEA:13066"/>
    </physiologicalReaction>
</comment>
<comment type="subunit">
    <text evidence="3 5">Forms homohexameric rings (Probable). Can form a dodecamer with ruvbl1 made of two stacked hexameric rings (By similarity). Component of the chromatin-remodeling Ino80 complex (By similarity). Component of some MLL1/MLL complex (By similarity).</text>
</comment>
<comment type="subcellular location">
    <subcellularLocation>
        <location evidence="1">Nucleus</location>
    </subcellularLocation>
    <subcellularLocation>
        <location evidence="2">Dynein axonemal particle</location>
    </subcellularLocation>
</comment>
<comment type="developmental stage">
    <text evidence="4">Widely expressed in the embryo. After 60 hours post-fertilization there is increased expression in heart, liver, branchial arches, exocrine pancreas and intestine.</text>
</comment>
<comment type="disruption phenotype">
    <text evidence="4">Fishes display embryonic cardiac hyperplasia with increased cell number and size by 72 hours post-fertilization. Gut and gut-derived organs are incapable of growth and differentiation after this time. The mutation enhances ATPase activity, rendering it DNA-independent and causes aggregation of the protein into large complexes.</text>
</comment>
<comment type="similarity">
    <text evidence="3">Belongs to the RuvB family.</text>
</comment>
<gene>
    <name type="primary">ruvbl2</name>
</gene>
<name>RUVB2_DANRE</name>
<sequence length="463" mass="51251">MAAQVATTKVPEVRDITRIERIGAHSHIRGLGLDDALEPRQVSQGMVGQLASRRAAGLILEMIKDGQIAGRAVLIAGQPGTGKTAIAMGIAQSLGPDTPFTALAGSEIFSLEMSKTEALSQAFRKAIGVRIKEETEIIEGEVVEIQIDRPATGTGAKVGKLTLKTTEMETIYDLGTKMIESLSKERVQAGDVITIDKATGKISKLGRSFTRARDYDAMGAQTQFVQCPEGELQKRKEVVHTVSLHEIDVINSRTQGFLALFSGDTGEIKSEVREQINAKVSEWREEGKAEIIPGVLFIDEVHMLDIECFSFLNRALESDLSPVLIMATNRGITRIRGTNYQSPHGIPIDMLDRLLIIATTPYTEKETRQILKIRCEEEDVELSEEAHTVLTRIGQETSLRYAIQLISTAGLVCRKRRGTEVQVEDIKRVYSLFLDEARSSQYMKEYQDSFLFNETQTSQMDTS</sequence>
<proteinExistence type="evidence at protein level"/>